<dbReference type="EMBL" id="BA000001">
    <property type="protein sequence ID" value="BAA29716.1"/>
    <property type="molecule type" value="Genomic_DNA"/>
</dbReference>
<dbReference type="PIR" id="B71107">
    <property type="entry name" value="B71107"/>
</dbReference>
<dbReference type="RefSeq" id="WP_010884725.1">
    <property type="nucleotide sequence ID" value="NC_000961.1"/>
</dbReference>
<dbReference type="SMR" id="O58361"/>
<dbReference type="STRING" id="70601.gene:9377569"/>
<dbReference type="EnsemblBacteria" id="BAA29716">
    <property type="protein sequence ID" value="BAA29716"/>
    <property type="gene ID" value="BAA29716"/>
</dbReference>
<dbReference type="GeneID" id="1442959"/>
<dbReference type="KEGG" id="pho:PH0627"/>
<dbReference type="eggNOG" id="arCOG04454">
    <property type="taxonomic scope" value="Archaea"/>
</dbReference>
<dbReference type="OrthoDB" id="85198at2157"/>
<dbReference type="Proteomes" id="UP000000752">
    <property type="component" value="Chromosome"/>
</dbReference>
<dbReference type="GO" id="GO:0005737">
    <property type="term" value="C:cytoplasm"/>
    <property type="evidence" value="ECO:0007669"/>
    <property type="project" value="TreeGrafter"/>
</dbReference>
<dbReference type="GO" id="GO:0046872">
    <property type="term" value="F:metal ion binding"/>
    <property type="evidence" value="ECO:0007669"/>
    <property type="project" value="UniProtKB-KW"/>
</dbReference>
<dbReference type="FunFam" id="3.40.1390.30:FF:000001">
    <property type="entry name" value="GTP cyclohydrolase 1 type 2"/>
    <property type="match status" value="1"/>
</dbReference>
<dbReference type="Gene3D" id="3.40.1390.30">
    <property type="entry name" value="NIF3 (NGG1p interacting factor 3)-like"/>
    <property type="match status" value="2"/>
</dbReference>
<dbReference type="InterPro" id="IPR002678">
    <property type="entry name" value="DUF34/NIF3"/>
</dbReference>
<dbReference type="InterPro" id="IPR036069">
    <property type="entry name" value="DUF34/NIF3_sf"/>
</dbReference>
<dbReference type="NCBIfam" id="TIGR00486">
    <property type="entry name" value="YbgI_SA1388"/>
    <property type="match status" value="1"/>
</dbReference>
<dbReference type="PANTHER" id="PTHR13799:SF14">
    <property type="entry name" value="GTP CYCLOHYDROLASE 1 TYPE 2 HOMOLOG"/>
    <property type="match status" value="1"/>
</dbReference>
<dbReference type="PANTHER" id="PTHR13799">
    <property type="entry name" value="NGG1 INTERACTING FACTOR 3"/>
    <property type="match status" value="1"/>
</dbReference>
<dbReference type="Pfam" id="PF01784">
    <property type="entry name" value="DUF34_NIF3"/>
    <property type="match status" value="1"/>
</dbReference>
<dbReference type="SUPFAM" id="SSF102705">
    <property type="entry name" value="NIF3 (NGG1p interacting factor 3)-like"/>
    <property type="match status" value="1"/>
</dbReference>
<organism>
    <name type="scientific">Pyrococcus horikoshii (strain ATCC 700860 / DSM 12428 / JCM 9974 / NBRC 100139 / OT-3)</name>
    <dbReference type="NCBI Taxonomy" id="70601"/>
    <lineage>
        <taxon>Archaea</taxon>
        <taxon>Methanobacteriati</taxon>
        <taxon>Methanobacteriota</taxon>
        <taxon>Thermococci</taxon>
        <taxon>Thermococcales</taxon>
        <taxon>Thermococcaceae</taxon>
        <taxon>Pyrococcus</taxon>
    </lineage>
</organism>
<evidence type="ECO:0000250" key="1">
    <source>
        <dbReference type="UniProtKB" id="P0AFP6"/>
    </source>
</evidence>
<evidence type="ECO:0000250" key="2">
    <source>
        <dbReference type="UniProtKB" id="Q58337"/>
    </source>
</evidence>
<evidence type="ECO:0000305" key="3"/>
<keyword id="KW-0479">Metal-binding</keyword>
<comment type="subunit">
    <text evidence="2">Homohexamer.</text>
</comment>
<comment type="similarity">
    <text evidence="3">Belongs to the GTP cyclohydrolase I type 2/NIF3 family.</text>
</comment>
<feature type="chain" id="PRO_0000147351" description="GTP cyclohydrolase 1 type 2 homolog">
    <location>
        <begin position="1"/>
        <end position="250"/>
    </location>
</feature>
<feature type="binding site" evidence="1">
    <location>
        <position position="63"/>
    </location>
    <ligand>
        <name>a divalent metal cation</name>
        <dbReference type="ChEBI" id="CHEBI:60240"/>
        <label>1</label>
    </ligand>
</feature>
<feature type="binding site" evidence="1">
    <location>
        <position position="64"/>
    </location>
    <ligand>
        <name>a divalent metal cation</name>
        <dbReference type="ChEBI" id="CHEBI:60240"/>
        <label>2</label>
    </ligand>
</feature>
<feature type="binding site" evidence="1">
    <location>
        <position position="100"/>
    </location>
    <ligand>
        <name>a divalent metal cation</name>
        <dbReference type="ChEBI" id="CHEBI:60240"/>
        <label>1</label>
    </ligand>
</feature>
<feature type="binding site" evidence="1">
    <location>
        <position position="218"/>
    </location>
    <ligand>
        <name>a divalent metal cation</name>
        <dbReference type="ChEBI" id="CHEBI:60240"/>
        <label>2</label>
    </ligand>
</feature>
<feature type="binding site" evidence="1">
    <location>
        <position position="222"/>
    </location>
    <ligand>
        <name>a divalent metal cation</name>
        <dbReference type="ChEBI" id="CHEBI:60240"/>
        <label>1</label>
    </ligand>
</feature>
<feature type="binding site" evidence="1">
    <location>
        <position position="222"/>
    </location>
    <ligand>
        <name>a divalent metal cation</name>
        <dbReference type="ChEBI" id="CHEBI:60240"/>
        <label>2</label>
    </ligand>
</feature>
<gene>
    <name type="ordered locus">PH0627</name>
</gene>
<sequence>MDRDEIVSFLDEFLNISAYPDKSKNGLQVEGKEEVNTIAFAVDASLDTILKAKVFNADMLIVHHGIIWGGISYVRGLIAKRLKELLVAGINLYAVHLPLDAHPEVGNNVQLLKLLNLEAKEPFGEYHGVKIGYIGEFDEPKPLPLIAQILAEKLPAEYVKSYEFGLQEVKRIAVVSGGGGFAIEEASRKADLLITGEITHEDYRVAEDLRVSVIAAGHYATETLGVKALMGVLKEKFGVKTVFIDNPTGL</sequence>
<protein>
    <recommendedName>
        <fullName>GTP cyclohydrolase 1 type 2 homolog</fullName>
    </recommendedName>
</protein>
<reference key="1">
    <citation type="journal article" date="1998" name="DNA Res.">
        <title>Complete sequence and gene organization of the genome of a hyper-thermophilic archaebacterium, Pyrococcus horikoshii OT3.</title>
        <authorList>
            <person name="Kawarabayasi Y."/>
            <person name="Sawada M."/>
            <person name="Horikawa H."/>
            <person name="Haikawa Y."/>
            <person name="Hino Y."/>
            <person name="Yamamoto S."/>
            <person name="Sekine M."/>
            <person name="Baba S."/>
            <person name="Kosugi H."/>
            <person name="Hosoyama A."/>
            <person name="Nagai Y."/>
            <person name="Sakai M."/>
            <person name="Ogura K."/>
            <person name="Otsuka R."/>
            <person name="Nakazawa H."/>
            <person name="Takamiya M."/>
            <person name="Ohfuku Y."/>
            <person name="Funahashi T."/>
            <person name="Tanaka T."/>
            <person name="Kudoh Y."/>
            <person name="Yamazaki J."/>
            <person name="Kushida N."/>
            <person name="Oguchi A."/>
            <person name="Aoki K."/>
            <person name="Yoshizawa T."/>
            <person name="Nakamura Y."/>
            <person name="Robb F.T."/>
            <person name="Horikoshi K."/>
            <person name="Masuchi Y."/>
            <person name="Shizuya H."/>
            <person name="Kikuchi H."/>
        </authorList>
    </citation>
    <scope>NUCLEOTIDE SEQUENCE [LARGE SCALE GENOMIC DNA]</scope>
    <source>
        <strain>ATCC 700860 / DSM 12428 / JCM 9974 / NBRC 100139 / OT-3</strain>
    </source>
</reference>
<name>GCH1L_PYRHO</name>
<accession>O58361</accession>
<proteinExistence type="inferred from homology"/>